<sequence>MGQKVNPVGIRLGIVKDHNSVWYADKKNYSDHLLTDIKVREFLMKKLEKASVSKVIIERPPQNAKITIHTARPGIVIGKKGEDVDRLRQEVGELMKVPVHINIEEIRKPDLDAKLVASGVAGQLERRVMFRRAMKRAVQNAMRQGAKGIKIQVGGRLGGAEIARTEWYREGRVPLHTLRADIDYATHEAHTTYGVIGVKVWIFKGEILGGIEQVRAEKKAAKKKSSK</sequence>
<dbReference type="EMBL" id="CP000155">
    <property type="protein sequence ID" value="ABC32856.1"/>
    <property type="molecule type" value="Genomic_DNA"/>
</dbReference>
<dbReference type="RefSeq" id="WP_011399914.1">
    <property type="nucleotide sequence ID" value="NC_007645.1"/>
</dbReference>
<dbReference type="SMR" id="Q2S918"/>
<dbReference type="STRING" id="349521.HCH_06211"/>
<dbReference type="KEGG" id="hch:HCH_06211"/>
<dbReference type="eggNOG" id="COG0092">
    <property type="taxonomic scope" value="Bacteria"/>
</dbReference>
<dbReference type="HOGENOM" id="CLU_058591_0_2_6"/>
<dbReference type="OrthoDB" id="9806396at2"/>
<dbReference type="Proteomes" id="UP000000238">
    <property type="component" value="Chromosome"/>
</dbReference>
<dbReference type="GO" id="GO:0022627">
    <property type="term" value="C:cytosolic small ribosomal subunit"/>
    <property type="evidence" value="ECO:0007669"/>
    <property type="project" value="TreeGrafter"/>
</dbReference>
<dbReference type="GO" id="GO:0003729">
    <property type="term" value="F:mRNA binding"/>
    <property type="evidence" value="ECO:0007669"/>
    <property type="project" value="UniProtKB-UniRule"/>
</dbReference>
<dbReference type="GO" id="GO:0019843">
    <property type="term" value="F:rRNA binding"/>
    <property type="evidence" value="ECO:0007669"/>
    <property type="project" value="UniProtKB-UniRule"/>
</dbReference>
<dbReference type="GO" id="GO:0003735">
    <property type="term" value="F:structural constituent of ribosome"/>
    <property type="evidence" value="ECO:0007669"/>
    <property type="project" value="InterPro"/>
</dbReference>
<dbReference type="GO" id="GO:0006412">
    <property type="term" value="P:translation"/>
    <property type="evidence" value="ECO:0007669"/>
    <property type="project" value="UniProtKB-UniRule"/>
</dbReference>
<dbReference type="CDD" id="cd02412">
    <property type="entry name" value="KH-II_30S_S3"/>
    <property type="match status" value="1"/>
</dbReference>
<dbReference type="FunFam" id="3.30.1140.32:FF:000001">
    <property type="entry name" value="30S ribosomal protein S3"/>
    <property type="match status" value="1"/>
</dbReference>
<dbReference type="FunFam" id="3.30.300.20:FF:000001">
    <property type="entry name" value="30S ribosomal protein S3"/>
    <property type="match status" value="1"/>
</dbReference>
<dbReference type="Gene3D" id="3.30.300.20">
    <property type="match status" value="1"/>
</dbReference>
<dbReference type="Gene3D" id="3.30.1140.32">
    <property type="entry name" value="Ribosomal protein S3, C-terminal domain"/>
    <property type="match status" value="1"/>
</dbReference>
<dbReference type="HAMAP" id="MF_01309_B">
    <property type="entry name" value="Ribosomal_uS3_B"/>
    <property type="match status" value="1"/>
</dbReference>
<dbReference type="InterPro" id="IPR004087">
    <property type="entry name" value="KH_dom"/>
</dbReference>
<dbReference type="InterPro" id="IPR015946">
    <property type="entry name" value="KH_dom-like_a/b"/>
</dbReference>
<dbReference type="InterPro" id="IPR004044">
    <property type="entry name" value="KH_dom_type_2"/>
</dbReference>
<dbReference type="InterPro" id="IPR009019">
    <property type="entry name" value="KH_sf_prok-type"/>
</dbReference>
<dbReference type="InterPro" id="IPR036419">
    <property type="entry name" value="Ribosomal_S3_C_sf"/>
</dbReference>
<dbReference type="InterPro" id="IPR005704">
    <property type="entry name" value="Ribosomal_uS3_bac-typ"/>
</dbReference>
<dbReference type="InterPro" id="IPR001351">
    <property type="entry name" value="Ribosomal_uS3_C"/>
</dbReference>
<dbReference type="InterPro" id="IPR018280">
    <property type="entry name" value="Ribosomal_uS3_CS"/>
</dbReference>
<dbReference type="NCBIfam" id="TIGR01009">
    <property type="entry name" value="rpsC_bact"/>
    <property type="match status" value="1"/>
</dbReference>
<dbReference type="PANTHER" id="PTHR11760">
    <property type="entry name" value="30S/40S RIBOSOMAL PROTEIN S3"/>
    <property type="match status" value="1"/>
</dbReference>
<dbReference type="PANTHER" id="PTHR11760:SF19">
    <property type="entry name" value="SMALL RIBOSOMAL SUBUNIT PROTEIN US3C"/>
    <property type="match status" value="1"/>
</dbReference>
<dbReference type="Pfam" id="PF07650">
    <property type="entry name" value="KH_2"/>
    <property type="match status" value="1"/>
</dbReference>
<dbReference type="Pfam" id="PF00189">
    <property type="entry name" value="Ribosomal_S3_C"/>
    <property type="match status" value="1"/>
</dbReference>
<dbReference type="SMART" id="SM00322">
    <property type="entry name" value="KH"/>
    <property type="match status" value="1"/>
</dbReference>
<dbReference type="SUPFAM" id="SSF54814">
    <property type="entry name" value="Prokaryotic type KH domain (KH-domain type II)"/>
    <property type="match status" value="1"/>
</dbReference>
<dbReference type="SUPFAM" id="SSF54821">
    <property type="entry name" value="Ribosomal protein S3 C-terminal domain"/>
    <property type="match status" value="1"/>
</dbReference>
<dbReference type="PROSITE" id="PS50823">
    <property type="entry name" value="KH_TYPE_2"/>
    <property type="match status" value="1"/>
</dbReference>
<dbReference type="PROSITE" id="PS00548">
    <property type="entry name" value="RIBOSOMAL_S3"/>
    <property type="match status" value="1"/>
</dbReference>
<keyword id="KW-1185">Reference proteome</keyword>
<keyword id="KW-0687">Ribonucleoprotein</keyword>
<keyword id="KW-0689">Ribosomal protein</keyword>
<keyword id="KW-0694">RNA-binding</keyword>
<keyword id="KW-0699">rRNA-binding</keyword>
<evidence type="ECO:0000255" key="1">
    <source>
        <dbReference type="HAMAP-Rule" id="MF_01309"/>
    </source>
</evidence>
<evidence type="ECO:0000305" key="2"/>
<name>RS3_HAHCH</name>
<proteinExistence type="inferred from homology"/>
<comment type="function">
    <text evidence="1">Binds the lower part of the 30S subunit head. Binds mRNA in the 70S ribosome, positioning it for translation.</text>
</comment>
<comment type="subunit">
    <text evidence="1">Part of the 30S ribosomal subunit. Forms a tight complex with proteins S10 and S14.</text>
</comment>
<comment type="similarity">
    <text evidence="1">Belongs to the universal ribosomal protein uS3 family.</text>
</comment>
<protein>
    <recommendedName>
        <fullName evidence="1">Small ribosomal subunit protein uS3</fullName>
    </recommendedName>
    <alternativeName>
        <fullName evidence="2">30S ribosomal protein S3</fullName>
    </alternativeName>
</protein>
<organism>
    <name type="scientific">Hahella chejuensis (strain KCTC 2396)</name>
    <dbReference type="NCBI Taxonomy" id="349521"/>
    <lineage>
        <taxon>Bacteria</taxon>
        <taxon>Pseudomonadati</taxon>
        <taxon>Pseudomonadota</taxon>
        <taxon>Gammaproteobacteria</taxon>
        <taxon>Oceanospirillales</taxon>
        <taxon>Hahellaceae</taxon>
        <taxon>Hahella</taxon>
    </lineage>
</organism>
<feature type="chain" id="PRO_0000293800" description="Small ribosomal subunit protein uS3">
    <location>
        <begin position="1"/>
        <end position="227"/>
    </location>
</feature>
<feature type="domain" description="KH type-2" evidence="1">
    <location>
        <begin position="39"/>
        <end position="107"/>
    </location>
</feature>
<accession>Q2S918</accession>
<gene>
    <name evidence="1" type="primary">rpsC</name>
    <name type="ordered locus">HCH_06211</name>
</gene>
<reference key="1">
    <citation type="journal article" date="2005" name="Nucleic Acids Res.">
        <title>Genomic blueprint of Hahella chejuensis, a marine microbe producing an algicidal agent.</title>
        <authorList>
            <person name="Jeong H."/>
            <person name="Yim J.H."/>
            <person name="Lee C."/>
            <person name="Choi S.-H."/>
            <person name="Park Y.K."/>
            <person name="Yoon S.H."/>
            <person name="Hur C.-G."/>
            <person name="Kang H.-Y."/>
            <person name="Kim D."/>
            <person name="Lee H.H."/>
            <person name="Park K.H."/>
            <person name="Park S.-H."/>
            <person name="Park H.-S."/>
            <person name="Lee H.K."/>
            <person name="Oh T.K."/>
            <person name="Kim J.F."/>
        </authorList>
    </citation>
    <scope>NUCLEOTIDE SEQUENCE [LARGE SCALE GENOMIC DNA]</scope>
    <source>
        <strain>KCTC 2396</strain>
    </source>
</reference>